<name>VIRG_RHIRD</name>
<accession>Q44444</accession>
<accession>P06664</accession>
<keyword id="KW-0010">Activator</keyword>
<keyword id="KW-0192">Crown gall tumor</keyword>
<keyword id="KW-0963">Cytoplasm</keyword>
<keyword id="KW-0238">DNA-binding</keyword>
<keyword id="KW-0597">Phosphoprotein</keyword>
<keyword id="KW-0614">Plasmid</keyword>
<keyword id="KW-0804">Transcription</keyword>
<keyword id="KW-0805">Transcription regulation</keyword>
<keyword id="KW-0902">Two-component regulatory system</keyword>
<dbReference type="EMBL" id="J03216">
    <property type="protein sequence ID" value="AAA88657.1"/>
    <property type="molecule type" value="Genomic_DNA"/>
</dbReference>
<dbReference type="EMBL" id="X62885">
    <property type="protein sequence ID" value="CAA44677.1"/>
    <property type="molecule type" value="Genomic_DNA"/>
</dbReference>
<dbReference type="PIR" id="A25519">
    <property type="entry name" value="A25519"/>
</dbReference>
<dbReference type="RefSeq" id="WP_012478082.1">
    <property type="nucleotide sequence ID" value="NZ_LXKY01000002.1"/>
</dbReference>
<dbReference type="RefSeq" id="YP_001967542.1">
    <property type="nucleotide sequence ID" value="NC_010929.1"/>
</dbReference>
<dbReference type="SMR" id="Q44444"/>
<dbReference type="OrthoDB" id="9802426at2"/>
<dbReference type="GO" id="GO:0005829">
    <property type="term" value="C:cytosol"/>
    <property type="evidence" value="ECO:0007669"/>
    <property type="project" value="TreeGrafter"/>
</dbReference>
<dbReference type="GO" id="GO:0032993">
    <property type="term" value="C:protein-DNA complex"/>
    <property type="evidence" value="ECO:0007669"/>
    <property type="project" value="TreeGrafter"/>
</dbReference>
<dbReference type="GO" id="GO:0000156">
    <property type="term" value="F:phosphorelay response regulator activity"/>
    <property type="evidence" value="ECO:0007669"/>
    <property type="project" value="TreeGrafter"/>
</dbReference>
<dbReference type="GO" id="GO:0000976">
    <property type="term" value="F:transcription cis-regulatory region binding"/>
    <property type="evidence" value="ECO:0007669"/>
    <property type="project" value="TreeGrafter"/>
</dbReference>
<dbReference type="GO" id="GO:0006355">
    <property type="term" value="P:regulation of DNA-templated transcription"/>
    <property type="evidence" value="ECO:0007669"/>
    <property type="project" value="InterPro"/>
</dbReference>
<dbReference type="CDD" id="cd17594">
    <property type="entry name" value="REC_OmpR_VirG"/>
    <property type="match status" value="1"/>
</dbReference>
<dbReference type="CDD" id="cd00383">
    <property type="entry name" value="trans_reg_C"/>
    <property type="match status" value="1"/>
</dbReference>
<dbReference type="FunFam" id="1.10.10.10:FF:000099">
    <property type="entry name" value="Two-component system response regulator TorR"/>
    <property type="match status" value="1"/>
</dbReference>
<dbReference type="Gene3D" id="3.40.50.2300">
    <property type="match status" value="1"/>
</dbReference>
<dbReference type="Gene3D" id="6.10.250.690">
    <property type="match status" value="1"/>
</dbReference>
<dbReference type="Gene3D" id="1.10.10.10">
    <property type="entry name" value="Winged helix-like DNA-binding domain superfamily/Winged helix DNA-binding domain"/>
    <property type="match status" value="1"/>
</dbReference>
<dbReference type="InterPro" id="IPR011006">
    <property type="entry name" value="CheY-like_superfamily"/>
</dbReference>
<dbReference type="InterPro" id="IPR001867">
    <property type="entry name" value="OmpR/PhoB-type_DNA-bd"/>
</dbReference>
<dbReference type="InterPro" id="IPR016032">
    <property type="entry name" value="Sig_transdc_resp-reg_C-effctor"/>
</dbReference>
<dbReference type="InterPro" id="IPR001789">
    <property type="entry name" value="Sig_transdc_resp-reg_receiver"/>
</dbReference>
<dbReference type="InterPro" id="IPR039420">
    <property type="entry name" value="WalR-like"/>
</dbReference>
<dbReference type="InterPro" id="IPR036388">
    <property type="entry name" value="WH-like_DNA-bd_sf"/>
</dbReference>
<dbReference type="NCBIfam" id="NF010430">
    <property type="entry name" value="PRK13856.1"/>
    <property type="match status" value="1"/>
</dbReference>
<dbReference type="PANTHER" id="PTHR48111:SF4">
    <property type="entry name" value="DNA-BINDING DUAL TRANSCRIPTIONAL REGULATOR OMPR"/>
    <property type="match status" value="1"/>
</dbReference>
<dbReference type="PANTHER" id="PTHR48111">
    <property type="entry name" value="REGULATOR OF RPOS"/>
    <property type="match status" value="1"/>
</dbReference>
<dbReference type="Pfam" id="PF00072">
    <property type="entry name" value="Response_reg"/>
    <property type="match status" value="1"/>
</dbReference>
<dbReference type="Pfam" id="PF00486">
    <property type="entry name" value="Trans_reg_C"/>
    <property type="match status" value="1"/>
</dbReference>
<dbReference type="SMART" id="SM00448">
    <property type="entry name" value="REC"/>
    <property type="match status" value="1"/>
</dbReference>
<dbReference type="SMART" id="SM00862">
    <property type="entry name" value="Trans_reg_C"/>
    <property type="match status" value="1"/>
</dbReference>
<dbReference type="SUPFAM" id="SSF46894">
    <property type="entry name" value="C-terminal effector domain of the bipartite response regulators"/>
    <property type="match status" value="1"/>
</dbReference>
<dbReference type="SUPFAM" id="SSF52172">
    <property type="entry name" value="CheY-like"/>
    <property type="match status" value="1"/>
</dbReference>
<dbReference type="PROSITE" id="PS51755">
    <property type="entry name" value="OMPR_PHOB"/>
    <property type="match status" value="1"/>
</dbReference>
<dbReference type="PROSITE" id="PS50110">
    <property type="entry name" value="RESPONSE_REGULATORY"/>
    <property type="match status" value="1"/>
</dbReference>
<sequence length="267" mass="29998">MIVHPSRENFSSAVNKGSDFRLKGEPLKHVLLVDDDVAMRHLIIEYLTIHAFKVTAVADSTQFTRVLSSATVDVVVVDLNLVREDGLEIVRNLAAKSDIPIIIISGDRLEETDKVVALELGASDFIAKPFSIREFLARIRVALRVRPNVVRSKDRRSFCFTDWTLNLRQRRLMSEAGGEVKLTAGEFNLLLAFLEKPRDVLSREQLLIASRVRDEEVYDRSIDVLILRLRRKLEADPSSPQLIKTARGAGYFFDADVQVSHGGTMAA</sequence>
<geneLocation type="plasmid">
    <name>pTiA6</name>
</geneLocation>
<geneLocation type="plasmid">
    <name>pTiBo542</name>
</geneLocation>
<comment type="function">
    <text>VirG is required for the positive regulation of at least two vir loci encoded by the Ti plasmid of A.tumefaciens.</text>
</comment>
<comment type="subcellular location">
    <subcellularLocation>
        <location>Cytoplasm</location>
    </subcellularLocation>
</comment>
<comment type="PTM">
    <text>Phosphorylated by wide host range (WHR) VirA protein.</text>
</comment>
<proteinExistence type="inferred from homology"/>
<evidence type="ECO:0000255" key="1">
    <source>
        <dbReference type="PROSITE-ProRule" id="PRU00169"/>
    </source>
</evidence>
<evidence type="ECO:0000255" key="2">
    <source>
        <dbReference type="PROSITE-ProRule" id="PRU01091"/>
    </source>
</evidence>
<gene>
    <name type="primary">virG</name>
</gene>
<feature type="chain" id="PRO_0000081266" description="Regulatory protein VirG">
    <location>
        <begin position="1"/>
        <end position="267"/>
    </location>
</feature>
<feature type="domain" description="Response regulatory" evidence="1">
    <location>
        <begin position="29"/>
        <end position="143"/>
    </location>
</feature>
<feature type="DNA-binding region" description="OmpR/PhoB-type" evidence="2">
    <location>
        <begin position="155"/>
        <end position="255"/>
    </location>
</feature>
<feature type="modified residue" description="4-aspartylphosphate" evidence="1">
    <location>
        <position position="78"/>
    </location>
</feature>
<feature type="sequence variant" description="In plasmid pTiBo542.">
    <original>V</original>
    <variation>I</variation>
    <location>
        <position position="33"/>
    </location>
</feature>
<feature type="sequence variant" description="In plasmid pTiBo542.">
    <original>V</original>
    <variation>G</variation>
    <location>
        <position position="82"/>
    </location>
</feature>
<feature type="sequence variant" description="In plasmid pTiBo542.">
    <original>I</original>
    <variation>T</variation>
    <location>
        <position position="132"/>
    </location>
</feature>
<organism>
    <name type="scientific">Rhizobium radiobacter</name>
    <name type="common">Agrobacterium tumefaciens</name>
    <name type="synonym">Agrobacterium radiobacter</name>
    <dbReference type="NCBI Taxonomy" id="358"/>
    <lineage>
        <taxon>Bacteria</taxon>
        <taxon>Pseudomonadati</taxon>
        <taxon>Pseudomonadota</taxon>
        <taxon>Alphaproteobacteria</taxon>
        <taxon>Hyphomicrobiales</taxon>
        <taxon>Rhizobiaceae</taxon>
        <taxon>Rhizobium/Agrobacterium group</taxon>
        <taxon>Agrobacterium</taxon>
        <taxon>Agrobacterium tumefaciens complex</taxon>
    </lineage>
</organism>
<protein>
    <recommendedName>
        <fullName>Regulatory protein VirG</fullName>
    </recommendedName>
</protein>
<reference key="1">
    <citation type="journal article" date="1986" name="Proc. Natl. Acad. Sci. U.S.A.">
        <title>A gene essential for Agrobacterium virulence is homologous to a family of positive regulatory loci.</title>
        <authorList>
            <person name="Winans S.C."/>
            <person name="Ebert P.R."/>
            <person name="Stachel S.E."/>
            <person name="Gordon M.P."/>
            <person name="Nester E.W."/>
        </authorList>
    </citation>
    <scope>NUCLEOTIDE SEQUENCE [GENOMIC DNA]</scope>
    <source>
        <plasmid>pTiA6</plasmid>
    </source>
</reference>
<reference key="2">
    <citation type="journal article" date="1991" name="Mol. Gen. Genet.">
        <title>Characterization of the supervirulent virG gene of the Agrobacterium tumefaciens plasmid pTiBo542.</title>
        <authorList>
            <person name="Chen C.Y."/>
            <person name="Wang L."/>
            <person name="Winans S.C."/>
        </authorList>
    </citation>
    <scope>NUCLEOTIDE SEQUENCE [GENOMIC DNA]</scope>
    <source>
        <plasmid>pTiBo542</plasmid>
    </source>
</reference>